<evidence type="ECO:0000250" key="1">
    <source>
        <dbReference type="UniProtKB" id="Q96EN9"/>
    </source>
</evidence>
<evidence type="ECO:0000256" key="2">
    <source>
        <dbReference type="SAM" id="MobiDB-lite"/>
    </source>
</evidence>
<evidence type="ECO:0000305" key="3"/>
<keyword id="KW-1185">Reference proteome</keyword>
<organism>
    <name type="scientific">Bos taurus</name>
    <name type="common">Bovine</name>
    <dbReference type="NCBI Taxonomy" id="9913"/>
    <lineage>
        <taxon>Eukaryota</taxon>
        <taxon>Metazoa</taxon>
        <taxon>Chordata</taxon>
        <taxon>Craniata</taxon>
        <taxon>Vertebrata</taxon>
        <taxon>Euteleostomi</taxon>
        <taxon>Mammalia</taxon>
        <taxon>Eutheria</taxon>
        <taxon>Laurasiatheria</taxon>
        <taxon>Artiodactyla</taxon>
        <taxon>Ruminantia</taxon>
        <taxon>Pecora</taxon>
        <taxon>Bovidae</taxon>
        <taxon>Bovinae</taxon>
        <taxon>Bos</taxon>
    </lineage>
</organism>
<feature type="chain" id="PRO_0000305284" description="Required for excision 1-B domain-containing protein">
    <location>
        <begin position="1"/>
        <end position="180"/>
    </location>
</feature>
<feature type="region of interest" description="Disordered" evidence="2">
    <location>
        <begin position="1"/>
        <end position="23"/>
    </location>
</feature>
<gene>
    <name evidence="1" type="primary">REX1BD</name>
</gene>
<accession>Q17Q97</accession>
<proteinExistence type="evidence at transcript level"/>
<reference key="1">
    <citation type="submission" date="2006-06" db="EMBL/GenBank/DDBJ databases">
        <authorList>
            <consortium name="NIH - Mammalian Gene Collection (MGC) project"/>
        </authorList>
    </citation>
    <scope>NUCLEOTIDE SEQUENCE [LARGE SCALE MRNA]</scope>
    <source>
        <strain>Hereford</strain>
        <tissue>Fetal lung</tissue>
    </source>
</reference>
<sequence length="180" mass="20106">MITAEAASESTVPAVPGDTAATGVPEHEELVWPWKDAPIRELVQRIHQLQAERAQAFRRLEEGHRQYLSSGPPYDFPRYRSTVHEVTQVFAAASREVLAVEAELAGPRAQPLLASHVRSLQQLEETRLTTVALLQLMGTPELTGQEDSLQMHQLKMKVIKTMEAISEVLQDLRFDAESAE</sequence>
<dbReference type="EMBL" id="BC118476">
    <property type="protein sequence ID" value="AAI18477.1"/>
    <property type="molecule type" value="mRNA"/>
</dbReference>
<dbReference type="RefSeq" id="NP_001068958.1">
    <property type="nucleotide sequence ID" value="NM_001075490.2"/>
</dbReference>
<dbReference type="SMR" id="Q17Q97"/>
<dbReference type="FunCoup" id="Q17Q97">
    <property type="interactions" value="202"/>
</dbReference>
<dbReference type="STRING" id="9913.ENSBTAP00000036391"/>
<dbReference type="PaxDb" id="9913-ENSBTAP00000036391"/>
<dbReference type="GeneID" id="511085"/>
<dbReference type="KEGG" id="bta:511085"/>
<dbReference type="CTD" id="55049"/>
<dbReference type="VEuPathDB" id="HostDB:ENSBTAG00000007739"/>
<dbReference type="eggNOG" id="ENOG502S01K">
    <property type="taxonomic scope" value="Eukaryota"/>
</dbReference>
<dbReference type="InParanoid" id="Q17Q97"/>
<dbReference type="OMA" id="VQGLRAW"/>
<dbReference type="OrthoDB" id="434723at2759"/>
<dbReference type="Proteomes" id="UP000009136">
    <property type="component" value="Chromosome 7"/>
</dbReference>
<dbReference type="Bgee" id="ENSBTAG00000007739">
    <property type="expression patterns" value="Expressed in retina and 110 other cell types or tissues"/>
</dbReference>
<dbReference type="InterPro" id="IPR039491">
    <property type="entry name" value="REX1-B"/>
</dbReference>
<dbReference type="PANTHER" id="PTHR28309">
    <property type="entry name" value="REQUIRED FOR EXCISION 1-B DOMAIN-CONTAINING PROTEIN"/>
    <property type="match status" value="1"/>
</dbReference>
<dbReference type="PANTHER" id="PTHR28309:SF1">
    <property type="entry name" value="REQUIRED FOR EXCISION 1-B DOMAIN-CONTAINING PROTEIN"/>
    <property type="match status" value="1"/>
</dbReference>
<dbReference type="Pfam" id="PF14966">
    <property type="entry name" value="DNA_repr_REX1B"/>
    <property type="match status" value="1"/>
</dbReference>
<protein>
    <recommendedName>
        <fullName evidence="3">Required for excision 1-B domain-containing protein</fullName>
    </recommendedName>
</protein>
<name>REX1B_BOVIN</name>